<proteinExistence type="evidence at protein level"/>
<keyword id="KW-0012">Acyltransferase</keyword>
<keyword id="KW-0963">Cytoplasm</keyword>
<keyword id="KW-0808">Transferase</keyword>
<reference key="1">
    <citation type="journal article" date="1994" name="J. Biol. Chem.">
        <title>Comparison of myristoyl-CoA:protein N-myristoyltransferases from three pathogenic fungi: Cryptococcus neoformans, Histoplasma capsulatum, and Candida albicans.</title>
        <authorList>
            <person name="Lodge J.K."/>
            <person name="Johnson R.L."/>
            <person name="Weinberg R.A."/>
            <person name="Gordon J.I."/>
        </authorList>
    </citation>
    <scope>NUCLEOTIDE SEQUENCE [GENOMIC DNA]</scope>
    <scope>MUTAGENESIS OF GLY-487</scope>
    <source>
        <strain>L210425</strain>
    </source>
</reference>
<name>NMT_CRYNE</name>
<feature type="chain" id="PRO_0000064239" description="Glycylpeptide N-tetradecanoyltransferase">
    <location>
        <begin position="1"/>
        <end position="491"/>
    </location>
</feature>
<feature type="region of interest" description="Disordered" evidence="3">
    <location>
        <begin position="53"/>
        <end position="79"/>
    </location>
</feature>
<feature type="active site" description="Proton acceptor; via carboxylate" evidence="1">
    <location>
        <position position="491"/>
    </location>
</feature>
<feature type="binding site" evidence="2">
    <location>
        <begin position="45"/>
        <end position="48"/>
    </location>
    <ligand>
        <name>tetradecanoyl-CoA</name>
        <dbReference type="ChEBI" id="CHEBI:57385"/>
    </ligand>
</feature>
<feature type="binding site" evidence="2">
    <location>
        <begin position="182"/>
        <end position="184"/>
    </location>
    <ligand>
        <name>tetradecanoyl-CoA</name>
        <dbReference type="ChEBI" id="CHEBI:57385"/>
    </ligand>
</feature>
<feature type="binding site" evidence="2">
    <location>
        <begin position="190"/>
        <end position="194"/>
    </location>
    <ligand>
        <name>tetradecanoyl-CoA</name>
        <dbReference type="ChEBI" id="CHEBI:57385"/>
    </ligand>
</feature>
<feature type="mutagenesis site" description="Causes temperature-dependent reduction in catalytic activity." evidence="4">
    <original>G</original>
    <variation>D</variation>
    <location>
        <position position="487"/>
    </location>
</feature>
<sequence>MDSSDNKAATDEEIRRALKAADLMKILDGKMALGNKSGTKNLGEHKFWKTQPVPQITGSGASAPMEEGPIDDPKTPADVKQEPGVLPAGFEWSTIDINDEEQSKEVYVLLCENYVEDDDAMFRFNYSREFLLWALTAPGYLPDWHIGVRVQKTKKLVAFISGIKIDIRVRAKTFPAAEINFLCVHKKLRSKRLAPVLIKEVTRRVNLTNIWQAIYTAGVILPTPIGTCRYFHRNLNPPKLVDIGFSPLPRGSTIARLVQQYSVPSHPRIPGFREMKKEDVPQVGALLRRYLDRFDVAQAFKDDDEVEHWFLSGQGKEVGGRRVEQVVWAYVVEDPTTHRITDLISFYALPSTIMKHPKHNLLNAAYMFYYATDVIFPPPSSSAHSDADVNAGESSVAAVGTGGEDAKTKKKLETRLNALTADLLIIAKQAGFDVFNALTLLDNNMFLQEQKFGPGDGYLNYYLYNWNCAPIDGGQHSTTAKQGSKIGVVML</sequence>
<dbReference type="EC" id="2.3.1.97"/>
<dbReference type="EMBL" id="L25116">
    <property type="protein sequence ID" value="AAA17547.1"/>
    <property type="molecule type" value="Genomic_DNA"/>
</dbReference>
<dbReference type="PIR" id="A49993">
    <property type="entry name" value="A49993"/>
</dbReference>
<dbReference type="SMR" id="P34809"/>
<dbReference type="VEuPathDB" id="FungiDB:CKF44_07926"/>
<dbReference type="VEuPathDB" id="FungiDB:CNAG_07926"/>
<dbReference type="VEuPathDB" id="FungiDB:CNBN0070"/>
<dbReference type="VEuPathDB" id="FungiDB:CNN00080"/>
<dbReference type="VEuPathDB" id="FungiDB:LQV05_002182"/>
<dbReference type="PHI-base" id="PHI:19"/>
<dbReference type="GO" id="GO:0005829">
    <property type="term" value="C:cytosol"/>
    <property type="evidence" value="ECO:0007669"/>
    <property type="project" value="EnsemblFungi"/>
</dbReference>
<dbReference type="GO" id="GO:0004379">
    <property type="term" value="F:glycylpeptide N-tetradecanoyltransferase activity"/>
    <property type="evidence" value="ECO:0007669"/>
    <property type="project" value="UniProtKB-EC"/>
</dbReference>
<dbReference type="FunFam" id="3.40.630.30:FF:000042">
    <property type="entry name" value="Glycylpeptide N-tetradecanoyltransferase"/>
    <property type="match status" value="1"/>
</dbReference>
<dbReference type="FunFam" id="3.40.630.30:FF:000056">
    <property type="entry name" value="Glycylpeptide N-tetradecanoyltransferase"/>
    <property type="match status" value="1"/>
</dbReference>
<dbReference type="Gene3D" id="3.40.630.30">
    <property type="match status" value="2"/>
</dbReference>
<dbReference type="InterPro" id="IPR016181">
    <property type="entry name" value="Acyl_CoA_acyltransferase"/>
</dbReference>
<dbReference type="InterPro" id="IPR000903">
    <property type="entry name" value="NMT"/>
</dbReference>
<dbReference type="InterPro" id="IPR022677">
    <property type="entry name" value="NMT_C"/>
</dbReference>
<dbReference type="InterPro" id="IPR022678">
    <property type="entry name" value="NMT_CS"/>
</dbReference>
<dbReference type="InterPro" id="IPR022676">
    <property type="entry name" value="NMT_N"/>
</dbReference>
<dbReference type="PANTHER" id="PTHR11377:SF5">
    <property type="entry name" value="GLYCYLPEPTIDE N-TETRADECANOYLTRANSFERASE"/>
    <property type="match status" value="1"/>
</dbReference>
<dbReference type="PANTHER" id="PTHR11377">
    <property type="entry name" value="N-MYRISTOYL TRANSFERASE"/>
    <property type="match status" value="1"/>
</dbReference>
<dbReference type="Pfam" id="PF01233">
    <property type="entry name" value="NMT"/>
    <property type="match status" value="1"/>
</dbReference>
<dbReference type="Pfam" id="PF02799">
    <property type="entry name" value="NMT_C"/>
    <property type="match status" value="1"/>
</dbReference>
<dbReference type="PIRSF" id="PIRSF015892">
    <property type="entry name" value="N-myristl_transf"/>
    <property type="match status" value="1"/>
</dbReference>
<dbReference type="SUPFAM" id="SSF55729">
    <property type="entry name" value="Acyl-CoA N-acyltransferases (Nat)"/>
    <property type="match status" value="2"/>
</dbReference>
<dbReference type="PROSITE" id="PS00975">
    <property type="entry name" value="NMT_1"/>
    <property type="match status" value="1"/>
</dbReference>
<dbReference type="PROSITE" id="PS00976">
    <property type="entry name" value="NMT_2"/>
    <property type="match status" value="1"/>
</dbReference>
<protein>
    <recommendedName>
        <fullName>Glycylpeptide N-tetradecanoyltransferase</fullName>
        <ecNumber>2.3.1.97</ecNumber>
    </recommendedName>
    <alternativeName>
        <fullName>Myristoyl-CoA:protein N-myristoyltransferase</fullName>
        <shortName>NMT</shortName>
    </alternativeName>
    <alternativeName>
        <fullName>Peptide N-myristoyltransferase</fullName>
    </alternativeName>
</protein>
<organism>
    <name type="scientific">Cryptococcus neoformans</name>
    <name type="common">Filobasidiella neoformans</name>
    <dbReference type="NCBI Taxonomy" id="5207"/>
    <lineage>
        <taxon>Eukaryota</taxon>
        <taxon>Fungi</taxon>
        <taxon>Dikarya</taxon>
        <taxon>Basidiomycota</taxon>
        <taxon>Agaricomycotina</taxon>
        <taxon>Tremellomycetes</taxon>
        <taxon>Tremellales</taxon>
        <taxon>Cryptococcaceae</taxon>
        <taxon>Cryptococcus</taxon>
        <taxon>Cryptococcus neoformans species complex</taxon>
    </lineage>
</organism>
<comment type="function">
    <text>Adds a myristoyl group to the N-terminal glycine residue of certain cellular proteins.</text>
</comment>
<comment type="catalytic activity">
    <reaction>
        <text>N-terminal glycyl-[protein] + tetradecanoyl-CoA = N-tetradecanoylglycyl-[protein] + CoA + H(+)</text>
        <dbReference type="Rhea" id="RHEA:15521"/>
        <dbReference type="Rhea" id="RHEA-COMP:12666"/>
        <dbReference type="Rhea" id="RHEA-COMP:12667"/>
        <dbReference type="ChEBI" id="CHEBI:15378"/>
        <dbReference type="ChEBI" id="CHEBI:57287"/>
        <dbReference type="ChEBI" id="CHEBI:57385"/>
        <dbReference type="ChEBI" id="CHEBI:64723"/>
        <dbReference type="ChEBI" id="CHEBI:133050"/>
        <dbReference type="EC" id="2.3.1.97"/>
    </reaction>
</comment>
<comment type="subunit">
    <text evidence="1">Monomer.</text>
</comment>
<comment type="subcellular location">
    <subcellularLocation>
        <location>Cytoplasm</location>
    </subcellularLocation>
</comment>
<comment type="similarity">
    <text evidence="5">Belongs to the NMT family.</text>
</comment>
<evidence type="ECO:0000250" key="1"/>
<evidence type="ECO:0000250" key="2">
    <source>
        <dbReference type="UniProtKB" id="P14743"/>
    </source>
</evidence>
<evidence type="ECO:0000256" key="3">
    <source>
        <dbReference type="SAM" id="MobiDB-lite"/>
    </source>
</evidence>
<evidence type="ECO:0000269" key="4">
    <source>
    </source>
</evidence>
<evidence type="ECO:0000305" key="5"/>
<accession>P34809</accession>